<organism>
    <name type="scientific">Bos taurus</name>
    <name type="common">Bovine</name>
    <dbReference type="NCBI Taxonomy" id="9913"/>
    <lineage>
        <taxon>Eukaryota</taxon>
        <taxon>Metazoa</taxon>
        <taxon>Chordata</taxon>
        <taxon>Craniata</taxon>
        <taxon>Vertebrata</taxon>
        <taxon>Euteleostomi</taxon>
        <taxon>Mammalia</taxon>
        <taxon>Eutheria</taxon>
        <taxon>Laurasiatheria</taxon>
        <taxon>Artiodactyla</taxon>
        <taxon>Ruminantia</taxon>
        <taxon>Pecora</taxon>
        <taxon>Bovidae</taxon>
        <taxon>Bovinae</taxon>
        <taxon>Bos</taxon>
    </lineage>
</organism>
<sequence length="372" mass="41151">MSTAALLTLVRSGGNQVRRRVLLRARGLQDDRWVMPTCHSSTSEPKWSRFDPDGSGRPATWDNFGIWDNRLEEPILLPPSIKYGKPIPKVSLQNVGSASQIGKRKENEDRFGFAQLTNEVLYFAVYDGHGGPAAADFCHTHMEKCILDLLPKEENLETVLTLAFLEIDKTFARHAHLSADATLLTSGTTATVALLRDGIELVIASVGDSRAILCRKGKPMKLTIDHTPERKDEKERIKKCGGFVAWNSLGQPHVNGRLAMTRSLGDLDLKTSGVIAEPETKRIKLHHADDSFLVLTTDGINFMVNSQEICDFVNQCHDPNEAAHAVTEQAIQYGTEDNTTAVVVPFGAWGKYKNSEITFSFSRSFASSGRWA</sequence>
<feature type="transit peptide" description="Mitochondrion" evidence="1">
    <location>
        <begin position="1"/>
        <end position="29"/>
    </location>
</feature>
<feature type="chain" id="PRO_0000278207" description="Protein phosphatase Mn(2+)-dependent 1K">
    <location>
        <begin position="30"/>
        <end position="372"/>
    </location>
</feature>
<feature type="domain" description="PPM-type phosphatase" evidence="5">
    <location>
        <begin position="94"/>
        <end position="346"/>
    </location>
</feature>
<feature type="region of interest" description="Critical for association with the BCKDH complex" evidence="4">
    <location>
        <begin position="46"/>
        <end position="61"/>
    </location>
</feature>
<feature type="binding site" evidence="4">
    <location>
        <position position="127"/>
    </location>
    <ligand>
        <name>Mn(2+)</name>
        <dbReference type="ChEBI" id="CHEBI:29035"/>
        <label>1</label>
    </ligand>
</feature>
<feature type="binding site" evidence="4">
    <location>
        <position position="127"/>
    </location>
    <ligand>
        <name>Mn(2+)</name>
        <dbReference type="ChEBI" id="CHEBI:29035"/>
        <label>2</label>
    </ligand>
</feature>
<feature type="binding site" evidence="4">
    <location>
        <position position="128"/>
    </location>
    <ligand>
        <name>Mn(2+)</name>
        <dbReference type="ChEBI" id="CHEBI:29035"/>
        <label>1</label>
    </ligand>
</feature>
<feature type="binding site" evidence="4">
    <location>
        <position position="298"/>
    </location>
    <ligand>
        <name>Mn(2+)</name>
        <dbReference type="ChEBI" id="CHEBI:29035"/>
        <label>2</label>
    </ligand>
</feature>
<feature type="binding site" evidence="4">
    <location>
        <position position="337"/>
    </location>
    <ligand>
        <name>Mn(2+)</name>
        <dbReference type="ChEBI" id="CHEBI:29035"/>
        <label>2</label>
    </ligand>
</feature>
<feature type="modified residue" description="Phosphoserine" evidence="3">
    <location>
        <position position="248"/>
    </location>
</feature>
<feature type="splice variant" id="VSP_023155" description="In isoform 2." evidence="6">
    <location>
        <begin position="106"/>
        <end position="153"/>
    </location>
</feature>
<feature type="sequence conflict" description="In Ref. 2; AAI18080." evidence="7" ref="2">
    <original>F</original>
    <variation>I</variation>
    <location>
        <position position="365"/>
    </location>
</feature>
<comment type="function">
    <text evidence="4">Serine/threonine-protein phosphatase component of macronutrients metabolism. Forms a functional kinase and phosphatase pair with BCKDK, serving as a metabolic regulatory node that coordinates branched-chain amino acids (BCAAs) with glucose and lipid metabolism via two distinct phosphoprotein targets: mitochondrial BCKDHA subunit of the branched-chain alpha-ketoacid dehydrogenase (BCKDH) complex and cytosolic ACLY, a lipogenic enzyme of Krebs cycle (By similarity). At high levels of branched-chain ketoacids, dephosphorylates and activates mitochondrial BCKDH complex, a multisubunit complex consisting of three multimeric components each involved in different steps of BCAA catabolism: E1 composed of BCKDHA and BCKDHB, E2 core composed of DBT monomers, and E3 composed of DLD monomers. Tightly associates with the E2 component of BCKDH complex and dephosphorylates BCKDHA on Ser-347 (By similarity). Regulates the reversible phosphorylation of ACLY in response to changes in cellular carbohydrate abundance such as occurs during fasting to feeding metabolic transition. At fasting state, appears to dephosphorylate ACLY on Ser-455 and inactivate it. Refeeding stimulates MLXIPL/ChREBP transcription factor, leading to increased BCKDK to PPM1K expression ratio, phosphorylation and activation of ACLY that ultimately results in the generation of malonyl-CoA and oxaloacetate immediate substrates of de novo lipogenesis and gluconeogenesis, respectively (By similarity). Recognizes phosphosites having SxS or RxxS motifs and strictly depends on Mn(2+) ions for the phosphatase activity. Regulates Ca(2+)-induced opening of mitochondrial transition pore and apoptotic cell death (By similarity).</text>
</comment>
<comment type="catalytic activity">
    <reaction evidence="4">
        <text>O-phospho-L-seryl-[3-methyl-2-oxobutanoate dehydrogenase] + H2O = L-seryl-[3-methyl-2-oxobutanoate dehydrogenase] + phosphate</text>
        <dbReference type="Rhea" id="RHEA:77247"/>
        <dbReference type="Rhea" id="RHEA-COMP:13695"/>
        <dbReference type="Rhea" id="RHEA-COMP:13696"/>
        <dbReference type="ChEBI" id="CHEBI:15377"/>
        <dbReference type="ChEBI" id="CHEBI:29999"/>
        <dbReference type="ChEBI" id="CHEBI:43474"/>
        <dbReference type="ChEBI" id="CHEBI:83421"/>
        <dbReference type="EC" id="3.1.3.52"/>
    </reaction>
    <physiologicalReaction direction="left-to-right" evidence="4">
        <dbReference type="Rhea" id="RHEA:77248"/>
    </physiologicalReaction>
</comment>
<comment type="catalytic activity">
    <reaction evidence="4">
        <text>O-phospho-L-seryl-[protein] + H2O = L-seryl-[protein] + phosphate</text>
        <dbReference type="Rhea" id="RHEA:20629"/>
        <dbReference type="Rhea" id="RHEA-COMP:9863"/>
        <dbReference type="Rhea" id="RHEA-COMP:11604"/>
        <dbReference type="ChEBI" id="CHEBI:15377"/>
        <dbReference type="ChEBI" id="CHEBI:29999"/>
        <dbReference type="ChEBI" id="CHEBI:43474"/>
        <dbReference type="ChEBI" id="CHEBI:83421"/>
        <dbReference type="EC" id="3.1.3.16"/>
    </reaction>
    <physiologicalReaction direction="left-to-right" evidence="4">
        <dbReference type="Rhea" id="RHEA:20630"/>
    </physiologicalReaction>
</comment>
<comment type="cofactor">
    <cofactor evidence="4">
        <name>Mn(2+)</name>
        <dbReference type="ChEBI" id="CHEBI:29035"/>
    </cofactor>
    <text evidence="4">Binds 2 Mn(2+) ions per subunit.</text>
</comment>
<comment type="pathway">
    <text evidence="4">Protein modification.</text>
</comment>
<comment type="subunit">
    <text evidence="4">Monomer. Interacts with E1 and E2 components of the branched-chain alpha-ketoacid dehydrogenase (BCKDH) complex; this interaction requires colocalization in mitochondria. Interacts with BCKDHA but not with BCKDHB of the E1 component. Interacts with the 24-meric E2 core composed of DBT monomers with a 24:1 stoichiometry; the N-terminal region (residues 49-61) of PPM1K and C-terminal linker of the lipoyl domain of DBT (residues 145-160) are critical for this interaction, whereas the lipoyl prosthetic group is dispensable. Competes with BCKDK for binding to the E2 core; this interaction is modulated by branched-chain alpha-keto acids. At steady state, BCKDH holoenzyme preferentially binds BCKDK and BCKDHA is phosphorylated. In response to high levels of branched-chain alpha-keto acids, the inhibitory BCKDK is replaced by activating PPM1K leading to BCKDHA dephosphorylation and BCAA degradation.</text>
</comment>
<comment type="subcellular location">
    <subcellularLocation>
        <location evidence="4">Mitochondrion matrix</location>
    </subcellularLocation>
    <text evidence="2">Detected in the cytosolic compartment of liver cells.</text>
</comment>
<comment type="alternative products">
    <event type="alternative splicing"/>
    <isoform>
        <id>Q2PC20-1</id>
        <name>1</name>
        <sequence type="displayed"/>
    </isoform>
    <isoform>
        <id>Q2PC20-2</id>
        <name>2</name>
        <sequence type="described" ref="VSP_023155"/>
    </isoform>
</comment>
<comment type="similarity">
    <text evidence="7">Belongs to the PP2C family.</text>
</comment>
<gene>
    <name type="primary">PPM1K</name>
</gene>
<name>PPM1K_BOVIN</name>
<evidence type="ECO:0000250" key="1"/>
<evidence type="ECO:0000250" key="2">
    <source>
        <dbReference type="UniProtKB" id="A6K136"/>
    </source>
</evidence>
<evidence type="ECO:0000250" key="3">
    <source>
        <dbReference type="UniProtKB" id="Q8BXN7"/>
    </source>
</evidence>
<evidence type="ECO:0000250" key="4">
    <source>
        <dbReference type="UniProtKB" id="Q8N3J5"/>
    </source>
</evidence>
<evidence type="ECO:0000255" key="5">
    <source>
        <dbReference type="PROSITE-ProRule" id="PRU01082"/>
    </source>
</evidence>
<evidence type="ECO:0000303" key="6">
    <source ref="1"/>
</evidence>
<evidence type="ECO:0000305" key="7"/>
<dbReference type="EC" id="3.1.3.16" evidence="4"/>
<dbReference type="EC" id="3.1.3.52" evidence="4"/>
<dbReference type="EMBL" id="AJ871967">
    <property type="protein sequence ID" value="CAI44748.1"/>
    <property type="molecule type" value="mRNA"/>
</dbReference>
<dbReference type="EMBL" id="AJ871968">
    <property type="protein sequence ID" value="CAI44749.1"/>
    <property type="molecule type" value="mRNA"/>
</dbReference>
<dbReference type="EMBL" id="BC118079">
    <property type="protein sequence ID" value="AAI18080.1"/>
    <property type="molecule type" value="mRNA"/>
</dbReference>
<dbReference type="RefSeq" id="NP_001039939.1">
    <property type="nucleotide sequence ID" value="NM_001046474.2"/>
</dbReference>
<dbReference type="RefSeq" id="XP_005207855.1">
    <molecule id="Q2PC20-1"/>
    <property type="nucleotide sequence ID" value="XM_005207798.5"/>
</dbReference>
<dbReference type="SMR" id="Q2PC20"/>
<dbReference type="FunCoup" id="Q2PC20">
    <property type="interactions" value="57"/>
</dbReference>
<dbReference type="STRING" id="9913.ENSBTAP00000007563"/>
<dbReference type="PaxDb" id="9913-ENSBTAP00000007563"/>
<dbReference type="Ensembl" id="ENSBTAT00000007563.4">
    <molecule id="Q2PC20-1"/>
    <property type="protein sequence ID" value="ENSBTAP00000007563.3"/>
    <property type="gene ID" value="ENSBTAG00000005754.5"/>
</dbReference>
<dbReference type="GeneID" id="540329"/>
<dbReference type="KEGG" id="bta:540329"/>
<dbReference type="CTD" id="152926"/>
<dbReference type="VEuPathDB" id="HostDB:ENSBTAG00000005754"/>
<dbReference type="eggNOG" id="KOG0698">
    <property type="taxonomic scope" value="Eukaryota"/>
</dbReference>
<dbReference type="GeneTree" id="ENSGT00940000156633"/>
<dbReference type="HOGENOM" id="CLU_013173_1_3_1"/>
<dbReference type="InParanoid" id="Q2PC20"/>
<dbReference type="OMA" id="CHTHMKK"/>
<dbReference type="OrthoDB" id="416093at2759"/>
<dbReference type="TreeFam" id="TF354344"/>
<dbReference type="Reactome" id="R-BTA-70895">
    <property type="pathway name" value="Branched-chain amino acid catabolism"/>
</dbReference>
<dbReference type="Proteomes" id="UP000009136">
    <property type="component" value="Chromosome 6"/>
</dbReference>
<dbReference type="Bgee" id="ENSBTAG00000005754">
    <property type="expression patterns" value="Expressed in cardiac ventricle and 109 other cell types or tissues"/>
</dbReference>
<dbReference type="GO" id="GO:0005759">
    <property type="term" value="C:mitochondrial matrix"/>
    <property type="evidence" value="ECO:0000250"/>
    <property type="project" value="UniProtKB"/>
</dbReference>
<dbReference type="GO" id="GO:0005739">
    <property type="term" value="C:mitochondrion"/>
    <property type="evidence" value="ECO:0000318"/>
    <property type="project" value="GO_Central"/>
</dbReference>
<dbReference type="GO" id="GO:0047385">
    <property type="term" value="F:[3-methyl-2-oxobutanoate dehydrogenase (lipoamide)]-phosphatase activity"/>
    <property type="evidence" value="ECO:0007669"/>
    <property type="project" value="RHEA"/>
</dbReference>
<dbReference type="GO" id="GO:0046872">
    <property type="term" value="F:metal ion binding"/>
    <property type="evidence" value="ECO:0007669"/>
    <property type="project" value="UniProtKB-KW"/>
</dbReference>
<dbReference type="GO" id="GO:0004722">
    <property type="term" value="F:protein serine/threonine phosphatase activity"/>
    <property type="evidence" value="ECO:0000318"/>
    <property type="project" value="GO_Central"/>
</dbReference>
<dbReference type="GO" id="GO:1902531">
    <property type="term" value="P:regulation of intracellular signal transduction"/>
    <property type="evidence" value="ECO:0000318"/>
    <property type="project" value="GO_Central"/>
</dbReference>
<dbReference type="CDD" id="cd00143">
    <property type="entry name" value="PP2Cc"/>
    <property type="match status" value="1"/>
</dbReference>
<dbReference type="FunFam" id="3.60.40.10:FF:000033">
    <property type="entry name" value="Protein phosphatase 1K, mitochondrial"/>
    <property type="match status" value="1"/>
</dbReference>
<dbReference type="Gene3D" id="3.60.40.10">
    <property type="entry name" value="PPM-type phosphatase domain"/>
    <property type="match status" value="1"/>
</dbReference>
<dbReference type="InterPro" id="IPR015655">
    <property type="entry name" value="PP2C"/>
</dbReference>
<dbReference type="InterPro" id="IPR000222">
    <property type="entry name" value="PP2C_BS"/>
</dbReference>
<dbReference type="InterPro" id="IPR036457">
    <property type="entry name" value="PPM-type-like_dom_sf"/>
</dbReference>
<dbReference type="InterPro" id="IPR001932">
    <property type="entry name" value="PPM-type_phosphatase-like_dom"/>
</dbReference>
<dbReference type="PANTHER" id="PTHR47992">
    <property type="entry name" value="PROTEIN PHOSPHATASE"/>
    <property type="match status" value="1"/>
</dbReference>
<dbReference type="Pfam" id="PF00481">
    <property type="entry name" value="PP2C"/>
    <property type="match status" value="1"/>
</dbReference>
<dbReference type="SMART" id="SM00331">
    <property type="entry name" value="PP2C_SIG"/>
    <property type="match status" value="1"/>
</dbReference>
<dbReference type="SMART" id="SM00332">
    <property type="entry name" value="PP2Cc"/>
    <property type="match status" value="1"/>
</dbReference>
<dbReference type="SUPFAM" id="SSF81606">
    <property type="entry name" value="PP2C-like"/>
    <property type="match status" value="1"/>
</dbReference>
<dbReference type="PROSITE" id="PS01032">
    <property type="entry name" value="PPM_1"/>
    <property type="match status" value="1"/>
</dbReference>
<dbReference type="PROSITE" id="PS51746">
    <property type="entry name" value="PPM_2"/>
    <property type="match status" value="1"/>
</dbReference>
<protein>
    <recommendedName>
        <fullName>Protein phosphatase Mn(2+)-dependent 1K</fullName>
        <ecNumber evidence="4">3.1.3.16</ecNumber>
    </recommendedName>
    <alternativeName>
        <fullName evidence="4">Branched-chain alpha-ketoacid dehydrogenase phosphatase</fullName>
        <shortName evidence="4">BCKDH</shortName>
        <shortName evidence="4">BDP</shortName>
    </alternativeName>
    <alternativeName>
        <fullName evidence="4">Protein phosphatase 2C family member</fullName>
    </alternativeName>
    <alternativeName>
        <fullName>Protein phosphatase 2C isoform kappa</fullName>
        <shortName>PP2C-kappa</shortName>
    </alternativeName>
    <alternativeName>
        <fullName>[3-methyl-2-oxobutanoate dehydrogenase (2-methylpropanoyl-transferring)]-phosphatase</fullName>
        <ecNumber evidence="4">3.1.3.52</ecNumber>
    </alternativeName>
</protein>
<accession>Q2PC20</accession>
<accession>Q17R15</accession>
<accession>Q2PC19</accession>
<keyword id="KW-0025">Alternative splicing</keyword>
<keyword id="KW-0378">Hydrolase</keyword>
<keyword id="KW-0464">Manganese</keyword>
<keyword id="KW-0479">Metal-binding</keyword>
<keyword id="KW-0496">Mitochondrion</keyword>
<keyword id="KW-0597">Phosphoprotein</keyword>
<keyword id="KW-0904">Protein phosphatase</keyword>
<keyword id="KW-1185">Reference proteome</keyword>
<keyword id="KW-0809">Transit peptide</keyword>
<proteinExistence type="evidence at transcript level"/>
<reference key="1">
    <citation type="submission" date="2005-01" db="EMBL/GenBank/DDBJ databases">
        <authorList>
            <person name="Seroussi E."/>
        </authorList>
    </citation>
    <scope>NUCLEOTIDE SEQUENCE [MRNA] (ISOFORMS 1 AND 2)</scope>
    <source>
        <strain>Holstein</strain>
    </source>
</reference>
<reference key="2">
    <citation type="submission" date="2006-06" db="EMBL/GenBank/DDBJ databases">
        <authorList>
            <consortium name="NIH - Mammalian Gene Collection (MGC) project"/>
        </authorList>
    </citation>
    <scope>NUCLEOTIDE SEQUENCE [LARGE SCALE MRNA] (ISOFORM 1)</scope>
    <source>
        <strain>Hereford</strain>
        <tissue>Hypothalamus</tissue>
    </source>
</reference>